<organism>
    <name type="scientific">Salmonella arizonae (strain ATCC BAA-731 / CDC346-86 / RSK2980)</name>
    <dbReference type="NCBI Taxonomy" id="41514"/>
    <lineage>
        <taxon>Bacteria</taxon>
        <taxon>Pseudomonadati</taxon>
        <taxon>Pseudomonadota</taxon>
        <taxon>Gammaproteobacteria</taxon>
        <taxon>Enterobacterales</taxon>
        <taxon>Enterobacteriaceae</taxon>
        <taxon>Salmonella</taxon>
    </lineage>
</organism>
<sequence>MNTLPEQYANTALPTLPNQPQNPGVWPRAELTVAGIKARIDIFQHWLGEAFDSGICAEQLIEARTEFIDQLLQRLWIEAGFGQIADLALVAVGGYGRGELHPLSDIDLLILSRKNLPDEQAQKVGELLTLLWDIKLDVGHSVRTLEECLLEGLSDLTVATNLIETRLLIGDVALFLALQKHIFSEGFWPSDKFYAAKVEEQNQRHQRYHGTSYNLEPDIKSSPGGLRDIHTLQWVARRHFGATSLDEMVGFGFLTPAERAELNECLHILWRIRFALHLVLSRYDNRLLFDRQLSVAQRLNYSGEGNDPVERMMKDYFRVTRRVSELNQMLLQLFDEAILALPADEKPRPIDDEFQLRGTLIDLRDETLFIREPEAILRMFYMMVRNSAITGIYSTTLRHLRHARRHLSQPLCYIPEARTLFLSMLRHPGAVSRGLLPMHRHSVLWAYMPQWSHIVGQMQFDLFHAYTVDEHTIRVMLKLESFAKEETRQRHPLCVDLWPRLPHPELILIAALFHDIAKGRGGDHSVLGAQDVLTFAELHGLNSRETQLVAWLVRQHLLMSVTAQRRDIQDPEVIKQFAEEVQTETRLRFLVCLTVADICATNETLWNSWKQSLLRELYFATEKQLRRGMQNTPDMRERVRHHQLQALALLRMDNIDEAVLHKIWTRCRANYFVRHSPNQLAWHARHLLQHDLRQPLVLLSPQATRGGTEIFIWSPDRPYLFAAVCAELDRRNLSVHDAQIFTTRDGMAMDTFIVLEPDGSPLAPDRHEVIRASLEQTITQRSWQPPQPRRQPAKLRHFTVETEVNFLPTHTDRKSFLELIALDQPGLLARVGQIFADLGISLHGARITTIGERVEDLFIIATADRRALNNVLQLEVQQRLTAALNPNDKG</sequence>
<reference key="1">
    <citation type="submission" date="2007-11" db="EMBL/GenBank/DDBJ databases">
        <authorList>
            <consortium name="The Salmonella enterica serovar Arizonae Genome Sequencing Project"/>
            <person name="McClelland M."/>
            <person name="Sanderson E.K."/>
            <person name="Porwollik S."/>
            <person name="Spieth J."/>
            <person name="Clifton W.S."/>
            <person name="Fulton R."/>
            <person name="Chunyan W."/>
            <person name="Wollam A."/>
            <person name="Shah N."/>
            <person name="Pepin K."/>
            <person name="Bhonagiri V."/>
            <person name="Nash W."/>
            <person name="Johnson M."/>
            <person name="Thiruvilangam P."/>
            <person name="Wilson R."/>
        </authorList>
    </citation>
    <scope>NUCLEOTIDE SEQUENCE [LARGE SCALE GENOMIC DNA]</scope>
    <source>
        <strain>ATCC BAA-731 / CDC346-86 / RSK2980</strain>
    </source>
</reference>
<feature type="chain" id="PRO_1000078811" description="Bifunctional uridylyltransferase/uridylyl-removing enzyme">
    <location>
        <begin position="1"/>
        <end position="890"/>
    </location>
</feature>
<feature type="domain" description="HD" evidence="2">
    <location>
        <begin position="468"/>
        <end position="590"/>
    </location>
</feature>
<feature type="domain" description="ACT 1" evidence="1">
    <location>
        <begin position="709"/>
        <end position="784"/>
    </location>
</feature>
<feature type="domain" description="ACT 2" evidence="1">
    <location>
        <begin position="816"/>
        <end position="890"/>
    </location>
</feature>
<feature type="region of interest" description="Uridylyltransferase">
    <location>
        <begin position="1"/>
        <end position="349"/>
    </location>
</feature>
<feature type="region of interest" description="Uridylyl-removing">
    <location>
        <begin position="350"/>
        <end position="708"/>
    </location>
</feature>
<keyword id="KW-0378">Hydrolase</keyword>
<keyword id="KW-0460">Magnesium</keyword>
<keyword id="KW-0511">Multifunctional enzyme</keyword>
<keyword id="KW-0548">Nucleotidyltransferase</keyword>
<keyword id="KW-1185">Reference proteome</keyword>
<keyword id="KW-0677">Repeat</keyword>
<keyword id="KW-0808">Transferase</keyword>
<accession>A9MPJ5</accession>
<gene>
    <name evidence="1" type="primary">glnD</name>
    <name type="ordered locus">SARI_02790</name>
</gene>
<evidence type="ECO:0000255" key="1">
    <source>
        <dbReference type="HAMAP-Rule" id="MF_00277"/>
    </source>
</evidence>
<evidence type="ECO:0000255" key="2">
    <source>
        <dbReference type="PROSITE-ProRule" id="PRU01175"/>
    </source>
</evidence>
<proteinExistence type="inferred from homology"/>
<comment type="function">
    <text evidence="1">Modifies, by uridylylation and deuridylylation, the PII regulatory proteins (GlnB and homologs), in response to the nitrogen status of the cell that GlnD senses through the glutamine level. Under low glutamine levels, catalyzes the conversion of the PII proteins and UTP to PII-UMP and PPi, while under higher glutamine levels, GlnD hydrolyzes PII-UMP to PII and UMP (deuridylylation). Thus, controls uridylylation state and activity of the PII proteins, and plays an important role in the regulation of nitrogen assimilation and metabolism.</text>
</comment>
<comment type="catalytic activity">
    <reaction evidence="1">
        <text>[protein-PII]-L-tyrosine + UTP = [protein-PII]-uridylyl-L-tyrosine + diphosphate</text>
        <dbReference type="Rhea" id="RHEA:13673"/>
        <dbReference type="Rhea" id="RHEA-COMP:12147"/>
        <dbReference type="Rhea" id="RHEA-COMP:12148"/>
        <dbReference type="ChEBI" id="CHEBI:33019"/>
        <dbReference type="ChEBI" id="CHEBI:46398"/>
        <dbReference type="ChEBI" id="CHEBI:46858"/>
        <dbReference type="ChEBI" id="CHEBI:90602"/>
        <dbReference type="EC" id="2.7.7.59"/>
    </reaction>
</comment>
<comment type="catalytic activity">
    <reaction evidence="1">
        <text>[protein-PII]-uridylyl-L-tyrosine + H2O = [protein-PII]-L-tyrosine + UMP + H(+)</text>
        <dbReference type="Rhea" id="RHEA:48600"/>
        <dbReference type="Rhea" id="RHEA-COMP:12147"/>
        <dbReference type="Rhea" id="RHEA-COMP:12148"/>
        <dbReference type="ChEBI" id="CHEBI:15377"/>
        <dbReference type="ChEBI" id="CHEBI:15378"/>
        <dbReference type="ChEBI" id="CHEBI:46858"/>
        <dbReference type="ChEBI" id="CHEBI:57865"/>
        <dbReference type="ChEBI" id="CHEBI:90602"/>
    </reaction>
</comment>
<comment type="cofactor">
    <cofactor evidence="1">
        <name>Mg(2+)</name>
        <dbReference type="ChEBI" id="CHEBI:18420"/>
    </cofactor>
</comment>
<comment type="activity regulation">
    <text evidence="1">Uridylyltransferase (UTase) activity is inhibited by glutamine, while glutamine activates uridylyl-removing (UR) activity.</text>
</comment>
<comment type="domain">
    <text evidence="1">Has four distinct domains: an N-terminal nucleotidyltransferase (NT) domain responsible for UTase activity, a central HD domain that encodes UR activity, and two C-terminal ACT domains that seem to have a role in glutamine sensing.</text>
</comment>
<comment type="similarity">
    <text evidence="1">Belongs to the GlnD family.</text>
</comment>
<protein>
    <recommendedName>
        <fullName evidence="1">Bifunctional uridylyltransferase/uridylyl-removing enzyme</fullName>
        <shortName evidence="1">UTase/UR</shortName>
    </recommendedName>
    <alternativeName>
        <fullName evidence="1">Bifunctional [protein-PII] modification enzyme</fullName>
    </alternativeName>
    <alternativeName>
        <fullName evidence="1">Bifunctional nitrogen sensor protein</fullName>
    </alternativeName>
    <domain>
        <recommendedName>
            <fullName evidence="1">[Protein-PII] uridylyltransferase</fullName>
            <shortName evidence="1">PII uridylyltransferase</shortName>
            <shortName evidence="1">UTase</shortName>
            <ecNumber evidence="1">2.7.7.59</ecNumber>
        </recommendedName>
    </domain>
    <domain>
        <recommendedName>
            <fullName evidence="1">[Protein-PII]-UMP uridylyl-removing enzyme</fullName>
            <shortName evidence="1">UR</shortName>
            <ecNumber evidence="1">3.1.4.-</ecNumber>
        </recommendedName>
    </domain>
</protein>
<name>GLND_SALAR</name>
<dbReference type="EC" id="2.7.7.59" evidence="1"/>
<dbReference type="EC" id="3.1.4.-" evidence="1"/>
<dbReference type="EMBL" id="CP000880">
    <property type="protein sequence ID" value="ABX22638.1"/>
    <property type="molecule type" value="Genomic_DNA"/>
</dbReference>
<dbReference type="SMR" id="A9MPJ5"/>
<dbReference type="STRING" id="41514.SARI_02790"/>
<dbReference type="KEGG" id="ses:SARI_02790"/>
<dbReference type="HOGENOM" id="CLU_012833_0_0_6"/>
<dbReference type="Proteomes" id="UP000002084">
    <property type="component" value="Chromosome"/>
</dbReference>
<dbReference type="GO" id="GO:0008773">
    <property type="term" value="F:[protein-PII] uridylyltransferase activity"/>
    <property type="evidence" value="ECO:0007669"/>
    <property type="project" value="UniProtKB-UniRule"/>
</dbReference>
<dbReference type="GO" id="GO:0008081">
    <property type="term" value="F:phosphoric diester hydrolase activity"/>
    <property type="evidence" value="ECO:0007669"/>
    <property type="project" value="UniProtKB-UniRule"/>
</dbReference>
<dbReference type="GO" id="GO:0006808">
    <property type="term" value="P:regulation of nitrogen utilization"/>
    <property type="evidence" value="ECO:0007669"/>
    <property type="project" value="UniProtKB-UniRule"/>
</dbReference>
<dbReference type="CDD" id="cd04899">
    <property type="entry name" value="ACT_ACR-UUR-like_2"/>
    <property type="match status" value="1"/>
</dbReference>
<dbReference type="CDD" id="cd04900">
    <property type="entry name" value="ACT_UUR-like_1"/>
    <property type="match status" value="1"/>
</dbReference>
<dbReference type="CDD" id="cd00077">
    <property type="entry name" value="HDc"/>
    <property type="match status" value="1"/>
</dbReference>
<dbReference type="CDD" id="cd05401">
    <property type="entry name" value="NT_GlnE_GlnD_like"/>
    <property type="match status" value="1"/>
</dbReference>
<dbReference type="FunFam" id="1.10.3210.10:FF:000005">
    <property type="entry name" value="Bifunctional uridylyltransferase/uridylyl-removing enzyme"/>
    <property type="match status" value="1"/>
</dbReference>
<dbReference type="Gene3D" id="1.10.3210.10">
    <property type="entry name" value="Hypothetical protein af1432"/>
    <property type="match status" value="1"/>
</dbReference>
<dbReference type="HAMAP" id="MF_00277">
    <property type="entry name" value="PII_uridylyl_transf"/>
    <property type="match status" value="1"/>
</dbReference>
<dbReference type="InterPro" id="IPR045865">
    <property type="entry name" value="ACT-like_dom_sf"/>
</dbReference>
<dbReference type="InterPro" id="IPR002912">
    <property type="entry name" value="ACT_dom"/>
</dbReference>
<dbReference type="InterPro" id="IPR003607">
    <property type="entry name" value="HD/PDEase_dom"/>
</dbReference>
<dbReference type="InterPro" id="IPR006674">
    <property type="entry name" value="HD_domain"/>
</dbReference>
<dbReference type="InterPro" id="IPR043519">
    <property type="entry name" value="NT_sf"/>
</dbReference>
<dbReference type="InterPro" id="IPR013546">
    <property type="entry name" value="PII_UdlTrfase/GS_AdlTrfase"/>
</dbReference>
<dbReference type="InterPro" id="IPR002934">
    <property type="entry name" value="Polymerase_NTP_transf_dom"/>
</dbReference>
<dbReference type="InterPro" id="IPR010043">
    <property type="entry name" value="UTase/UR"/>
</dbReference>
<dbReference type="NCBIfam" id="NF002487">
    <property type="entry name" value="PRK01759.1"/>
    <property type="match status" value="1"/>
</dbReference>
<dbReference type="NCBIfam" id="NF003448">
    <property type="entry name" value="PRK05007.1"/>
    <property type="match status" value="1"/>
</dbReference>
<dbReference type="NCBIfam" id="TIGR01693">
    <property type="entry name" value="UTase_glnD"/>
    <property type="match status" value="1"/>
</dbReference>
<dbReference type="PANTHER" id="PTHR47320">
    <property type="entry name" value="BIFUNCTIONAL URIDYLYLTRANSFERASE/URIDYLYL-REMOVING ENZYME"/>
    <property type="match status" value="1"/>
</dbReference>
<dbReference type="PANTHER" id="PTHR47320:SF1">
    <property type="entry name" value="BIFUNCTIONAL URIDYLYLTRANSFERASE_URIDYLYL-REMOVING ENZYME"/>
    <property type="match status" value="1"/>
</dbReference>
<dbReference type="Pfam" id="PF01842">
    <property type="entry name" value="ACT"/>
    <property type="match status" value="2"/>
</dbReference>
<dbReference type="Pfam" id="PF08335">
    <property type="entry name" value="GlnD_UR_UTase"/>
    <property type="match status" value="1"/>
</dbReference>
<dbReference type="Pfam" id="PF01966">
    <property type="entry name" value="HD"/>
    <property type="match status" value="1"/>
</dbReference>
<dbReference type="Pfam" id="PF01909">
    <property type="entry name" value="NTP_transf_2"/>
    <property type="match status" value="1"/>
</dbReference>
<dbReference type="PIRSF" id="PIRSF006288">
    <property type="entry name" value="PII_uridyltransf"/>
    <property type="match status" value="1"/>
</dbReference>
<dbReference type="SMART" id="SM00471">
    <property type="entry name" value="HDc"/>
    <property type="match status" value="1"/>
</dbReference>
<dbReference type="SUPFAM" id="SSF55021">
    <property type="entry name" value="ACT-like"/>
    <property type="match status" value="2"/>
</dbReference>
<dbReference type="SUPFAM" id="SSF109604">
    <property type="entry name" value="HD-domain/PDEase-like"/>
    <property type="match status" value="1"/>
</dbReference>
<dbReference type="SUPFAM" id="SSF81301">
    <property type="entry name" value="Nucleotidyltransferase"/>
    <property type="match status" value="1"/>
</dbReference>
<dbReference type="SUPFAM" id="SSF81593">
    <property type="entry name" value="Nucleotidyltransferase substrate binding subunit/domain"/>
    <property type="match status" value="1"/>
</dbReference>
<dbReference type="PROSITE" id="PS51671">
    <property type="entry name" value="ACT"/>
    <property type="match status" value="2"/>
</dbReference>
<dbReference type="PROSITE" id="PS51831">
    <property type="entry name" value="HD"/>
    <property type="match status" value="1"/>
</dbReference>